<feature type="signal peptide" evidence="5">
    <location>
        <begin position="1" status="less than"/>
        <end position="21"/>
    </location>
</feature>
<feature type="propeptide" id="PRO_0000433584" evidence="5">
    <location>
        <begin position="22"/>
        <end position="26"/>
    </location>
</feature>
<feature type="chain" id="PRO_0000433585" description="U-actitoxin-Ael2c">
    <location>
        <begin position="29"/>
        <end position="70"/>
    </location>
</feature>
<feature type="disulfide bond" evidence="1">
    <location>
        <begin position="32"/>
        <end position="65"/>
    </location>
</feature>
<feature type="disulfide bond" evidence="1">
    <location>
        <begin position="34"/>
        <end position="58"/>
    </location>
</feature>
<feature type="disulfide bond" evidence="1">
    <location>
        <begin position="48"/>
        <end position="66"/>
    </location>
</feature>
<feature type="non-terminal residue">
    <location>
        <position position="1"/>
    </location>
</feature>
<comment type="function">
    <text evidence="1">Potently and selectively inhibits voltage-gated potassium channels Kv11/KCNH/ERG. Acts as a gating-modifier toxin that shifts the voltage-dependence of ERG activation in the positive direction and suppresses its current amplitudes elicited by strong depolarizing pulses that maximally activate the channels.</text>
</comment>
<comment type="subcellular location">
    <subcellularLocation>
        <location evidence="5">Secreted</location>
    </subcellularLocation>
    <subcellularLocation>
        <location evidence="5">Nematocyst</location>
    </subcellularLocation>
</comment>
<comment type="miscellaneous">
    <text evidence="2">Shows significant expression differences between stressed and unstressed A.elegantissima.</text>
</comment>
<comment type="similarity">
    <text evidence="5">Belongs to the sea anemone type 3 (BDS) potassium channel toxin family.</text>
</comment>
<dbReference type="EMBL" id="FG392547">
    <property type="status" value="NOT_ANNOTATED_CDS"/>
    <property type="molecule type" value="mRNA"/>
</dbReference>
<dbReference type="SMR" id="P0DMX5"/>
<dbReference type="GO" id="GO:0005576">
    <property type="term" value="C:extracellular region"/>
    <property type="evidence" value="ECO:0007669"/>
    <property type="project" value="UniProtKB-SubCell"/>
</dbReference>
<dbReference type="GO" id="GO:0042151">
    <property type="term" value="C:nematocyst"/>
    <property type="evidence" value="ECO:0007669"/>
    <property type="project" value="UniProtKB-SubCell"/>
</dbReference>
<dbReference type="GO" id="GO:0008200">
    <property type="term" value="F:ion channel inhibitor activity"/>
    <property type="evidence" value="ECO:0007669"/>
    <property type="project" value="InterPro"/>
</dbReference>
<dbReference type="GO" id="GO:0015459">
    <property type="term" value="F:potassium channel regulator activity"/>
    <property type="evidence" value="ECO:0007669"/>
    <property type="project" value="UniProtKB-KW"/>
</dbReference>
<dbReference type="GO" id="GO:0090729">
    <property type="term" value="F:toxin activity"/>
    <property type="evidence" value="ECO:0007669"/>
    <property type="project" value="UniProtKB-KW"/>
</dbReference>
<dbReference type="Gene3D" id="2.20.20.10">
    <property type="entry name" value="Anthopleurin-A"/>
    <property type="match status" value="1"/>
</dbReference>
<dbReference type="InterPro" id="IPR012414">
    <property type="entry name" value="BDS_K_chnl_tox"/>
</dbReference>
<dbReference type="InterPro" id="IPR023355">
    <property type="entry name" value="Myo_ane_neurotoxin_sf"/>
</dbReference>
<dbReference type="Pfam" id="PF07936">
    <property type="entry name" value="Defensin_4"/>
    <property type="match status" value="1"/>
</dbReference>
<dbReference type="SUPFAM" id="SSF57392">
    <property type="entry name" value="Defensin-like"/>
    <property type="match status" value="1"/>
</dbReference>
<proteinExistence type="evidence at transcript level"/>
<keyword id="KW-0165">Cleavage on pair of basic residues</keyword>
<keyword id="KW-1015">Disulfide bond</keyword>
<keyword id="KW-0872">Ion channel impairing toxin</keyword>
<keyword id="KW-0166">Nematocyst</keyword>
<keyword id="KW-0528">Neurotoxin</keyword>
<keyword id="KW-0632">Potassium channel impairing toxin</keyword>
<keyword id="KW-0964">Secreted</keyword>
<keyword id="KW-0732">Signal</keyword>
<keyword id="KW-0800">Toxin</keyword>
<keyword id="KW-1220">Voltage-gated potassium channel impairing toxin</keyword>
<evidence type="ECO:0000250" key="1">
    <source>
        <dbReference type="UniProtKB" id="P61541"/>
    </source>
</evidence>
<evidence type="ECO:0000269" key="2">
    <source>
    </source>
</evidence>
<evidence type="ECO:0000303" key="3">
    <source>
    </source>
</evidence>
<evidence type="ECO:0000303" key="4">
    <source>
    </source>
</evidence>
<evidence type="ECO:0000305" key="5"/>
<reference key="1">
    <citation type="journal article" date="2008" name="Comp. Biochem. Physiol.">
        <title>Response of the symbiotic cnidarian Anthopleura elegantissima transcriptome to temperature and UV increase.</title>
        <authorList>
            <person name="Richier S."/>
            <person name="Rodriguez-Lanetty M."/>
            <person name="Schnitzler C.E."/>
            <person name="Weis V.M."/>
        </authorList>
    </citation>
    <scope>NUCLEOTIDE SEQUENCE [MRNA]</scope>
</reference>
<reference key="2">
    <citation type="journal article" date="2012" name="Peptides">
        <title>Peptide fingerprinting of the neurotoxic fractions isolated from the secretions of sea anemones Stichodactyla helianthus and Bunodosoma granulifera. New members of the APETx-like family identified by a 454 pyrosequencing approach.</title>
        <authorList>
            <person name="Rodriguez A.A."/>
            <person name="Cassoli J.S."/>
            <person name="Sa F."/>
            <person name="Dong Z.Q."/>
            <person name="de Freitas J.C."/>
            <person name="Pimenta A.M."/>
            <person name="de Lima M.E."/>
            <person name="Konno K."/>
            <person name="Lee S.M."/>
            <person name="Garateix A."/>
            <person name="Zaharenko A.J."/>
        </authorList>
    </citation>
    <scope>NOMENCLATURE</scope>
</reference>
<reference key="3">
    <citation type="journal article" date="2012" name="Toxicon">
        <title>Development of a rational nomenclature for naming peptide and protein toxins from sea anemones.</title>
        <authorList>
            <person name="Oliveira J.S."/>
            <person name="Fuentes-Silva D."/>
            <person name="King G.F."/>
        </authorList>
    </citation>
    <scope>NOMENCLATURE</scope>
</reference>
<sequence length="70" mass="7689">SYQRFLFLVVVASLIATSLAIPKDLEKRGTTCYCGNTIGIYWFAKKTCPSGRGYTGSCGYFLGICCYPVD</sequence>
<name>BDS2C_ANTEL</name>
<organism>
    <name type="scientific">Anthopleura elegantissima</name>
    <name type="common">Green aggregating anemone</name>
    <name type="synonym">Actinia elegantissima</name>
    <dbReference type="NCBI Taxonomy" id="6110"/>
    <lineage>
        <taxon>Eukaryota</taxon>
        <taxon>Metazoa</taxon>
        <taxon>Cnidaria</taxon>
        <taxon>Anthozoa</taxon>
        <taxon>Hexacorallia</taxon>
        <taxon>Actiniaria</taxon>
        <taxon>Actiniidae</taxon>
        <taxon>Anthopleura</taxon>
    </lineage>
</organism>
<protein>
    <recommendedName>
        <fullName evidence="4">U-actitoxin-Ael2c</fullName>
        <shortName evidence="4">U-AITX-Ael2c</shortName>
    </recommendedName>
    <alternativeName>
        <fullName evidence="3">U-AITX-Ael1a</fullName>
    </alternativeName>
</protein>
<accession>P0DMX5</accession>